<organism>
    <name type="scientific">Shigella flexneri</name>
    <dbReference type="NCBI Taxonomy" id="623"/>
    <lineage>
        <taxon>Bacteria</taxon>
        <taxon>Pseudomonadati</taxon>
        <taxon>Pseudomonadota</taxon>
        <taxon>Gammaproteobacteria</taxon>
        <taxon>Enterobacterales</taxon>
        <taxon>Enterobacteriaceae</taxon>
        <taxon>Shigella</taxon>
    </lineage>
</organism>
<proteinExistence type="inferred from homology"/>
<gene>
    <name type="primary">ompR</name>
    <name type="ordered locus">SF3424</name>
    <name type="ordered locus">S4339</name>
</gene>
<protein>
    <recommendedName>
        <fullName evidence="5">DNA-binding dual transcriptional regulator OmpR</fullName>
    </recommendedName>
    <alternativeName>
        <fullName evidence="5">Transcriptional regulatory protein OmpR</fullName>
    </alternativeName>
</protein>
<reference key="1">
    <citation type="submission" date="2000-04" db="EMBL/GenBank/DDBJ databases">
        <title>Nucleotide sequence of the ompB operon of Shigella flexneri.</title>
        <authorList>
            <person name="Weber A."/>
            <person name="Jung K."/>
        </authorList>
    </citation>
    <scope>NUCLEOTIDE SEQUENCE [GENOMIC DNA]</scope>
</reference>
<reference key="2">
    <citation type="journal article" date="2002" name="Nucleic Acids Res.">
        <title>Genome sequence of Shigella flexneri 2a: insights into pathogenicity through comparison with genomes of Escherichia coli K12 and O157.</title>
        <authorList>
            <person name="Jin Q."/>
            <person name="Yuan Z."/>
            <person name="Xu J."/>
            <person name="Wang Y."/>
            <person name="Shen Y."/>
            <person name="Lu W."/>
            <person name="Wang J."/>
            <person name="Liu H."/>
            <person name="Yang J."/>
            <person name="Yang F."/>
            <person name="Zhang X."/>
            <person name="Zhang J."/>
            <person name="Yang G."/>
            <person name="Wu H."/>
            <person name="Qu D."/>
            <person name="Dong J."/>
            <person name="Sun L."/>
            <person name="Xue Y."/>
            <person name="Zhao A."/>
            <person name="Gao Y."/>
            <person name="Zhu J."/>
            <person name="Kan B."/>
            <person name="Ding K."/>
            <person name="Chen S."/>
            <person name="Cheng H."/>
            <person name="Yao Z."/>
            <person name="He B."/>
            <person name="Chen R."/>
            <person name="Ma D."/>
            <person name="Qiang B."/>
            <person name="Wen Y."/>
            <person name="Hou Y."/>
            <person name="Yu J."/>
        </authorList>
    </citation>
    <scope>NUCLEOTIDE SEQUENCE [LARGE SCALE GENOMIC DNA]</scope>
    <source>
        <strain>301 / Serotype 2a</strain>
    </source>
</reference>
<reference key="3">
    <citation type="journal article" date="2003" name="Infect. Immun.">
        <title>Complete genome sequence and comparative genomics of Shigella flexneri serotype 2a strain 2457T.</title>
        <authorList>
            <person name="Wei J."/>
            <person name="Goldberg M.B."/>
            <person name="Burland V."/>
            <person name="Venkatesan M.M."/>
            <person name="Deng W."/>
            <person name="Fournier G."/>
            <person name="Mayhew G.F."/>
            <person name="Plunkett G. III"/>
            <person name="Rose D.J."/>
            <person name="Darling A."/>
            <person name="Mau B."/>
            <person name="Perna N.T."/>
            <person name="Payne S.M."/>
            <person name="Runyen-Janecky L.J."/>
            <person name="Zhou S."/>
            <person name="Schwartz D.C."/>
            <person name="Blattner F.R."/>
        </authorList>
    </citation>
    <scope>NUCLEOTIDE SEQUENCE [LARGE SCALE GENOMIC DNA]</scope>
    <source>
        <strain>ATCC 700930 / 2457T / Serotype 2a</strain>
    </source>
</reference>
<reference key="4">
    <citation type="journal article" date="1999" name="J. Bacteriol.">
        <title>Identification of a conserved N-terminal sequence involved in transmembrane signal transduction in EnvZ.</title>
        <authorList>
            <person name="Waukau J."/>
            <person name="Forst S."/>
        </authorList>
    </citation>
    <scope>NUCLEOTIDE SEQUENCE [GENOMIC DNA] OF 48-239</scope>
    <source>
        <strain>ATCC 12022 / CDC 3591-52 / Serotype 2b</strain>
    </source>
</reference>
<name>OMPR_SHIFL</name>
<keyword id="KW-0010">Activator</keyword>
<keyword id="KW-0963">Cytoplasm</keyword>
<keyword id="KW-0238">DNA-binding</keyword>
<keyword id="KW-0597">Phosphoprotein</keyword>
<keyword id="KW-1185">Reference proteome</keyword>
<keyword id="KW-0678">Repressor</keyword>
<keyword id="KW-0346">Stress response</keyword>
<keyword id="KW-0804">Transcription</keyword>
<keyword id="KW-0805">Transcription regulation</keyword>
<keyword id="KW-0902">Two-component regulatory system</keyword>
<keyword id="KW-0843">Virulence</keyword>
<feature type="chain" id="PRO_0000081181" description="DNA-binding dual transcriptional regulator OmpR">
    <location>
        <begin position="1"/>
        <end position="239"/>
    </location>
</feature>
<feature type="domain" description="Response regulatory" evidence="3">
    <location>
        <begin position="6"/>
        <end position="120"/>
    </location>
</feature>
<feature type="DNA-binding region" description="OmpR/PhoB-type" evidence="4">
    <location>
        <begin position="135"/>
        <end position="234"/>
    </location>
</feature>
<feature type="modified residue" description="4-aspartylphosphate" evidence="2 3">
    <location>
        <position position="55"/>
    </location>
</feature>
<feature type="sequence conflict" description="In Ref. 4; AAB84276." evidence="5" ref="4">
    <original>SG</original>
    <variation>RR</variation>
    <location>
        <begin position="163"/>
        <end position="164"/>
    </location>
</feature>
<feature type="sequence conflict" description="In Ref. 4; AAB84276." evidence="5" ref="4">
    <original>EP</original>
    <variation>DA</variation>
    <location>
        <begin position="178"/>
        <end position="179"/>
    </location>
</feature>
<feature type="sequence conflict" description="In Ref. 4; AAB84276." evidence="5" ref="4">
    <original>R</original>
    <variation>A</variation>
    <location>
        <position position="209"/>
    </location>
</feature>
<comment type="function">
    <text evidence="1">Member of the two-component regulatory system EnvZ/OmpR involved in regulating expression of the outer membrane porins OmpC and OmpF as well as other genes. Unlike E.coli, OmpC is expressed at both low and high osmolarity, while OmpF is expressed at low osmolarity (By similarity). This two-component system plays a role in virulence (By similarity).</text>
</comment>
<comment type="subunit">
    <text evidence="2">Monomer and multimer.</text>
</comment>
<comment type="subcellular location">
    <subcellularLocation>
        <location evidence="2">Cytoplasm</location>
    </subcellularLocation>
</comment>
<comment type="PTM">
    <text evidence="2">Phosphorylated by EnvZ; this stimulates its DNA-binding ability. Asp-55 is the primary phosphate acceptor site.</text>
</comment>
<evidence type="ECO:0000250" key="1">
    <source>
        <dbReference type="UniProtKB" id="A0A4P7TS68"/>
    </source>
</evidence>
<evidence type="ECO:0000250" key="2">
    <source>
        <dbReference type="UniProtKB" id="P0AA16"/>
    </source>
</evidence>
<evidence type="ECO:0000255" key="3">
    <source>
        <dbReference type="PROSITE-ProRule" id="PRU00169"/>
    </source>
</evidence>
<evidence type="ECO:0000255" key="4">
    <source>
        <dbReference type="PROSITE-ProRule" id="PRU01091"/>
    </source>
</evidence>
<evidence type="ECO:0000305" key="5"/>
<accession>P0AA21</accession>
<accession>O31133</accession>
<accession>P03025</accession>
<accession>P08981</accession>
<accession>P41405</accession>
<sequence length="239" mass="27354">MQENYKILVVDDDMRLRALLERYLTEQGFQVRSVANAEQMDRLLTRESFHLMVLDLMLPGEDGLSICRRLRSQSNPMPIIMVTAKGEEVDRIVGLEIGADDYIPKPFNPRELLARIRAVLRRQANELPGAPSQEEAVIAFGKFKLNLGTREMFREDEPMPLTSGEFAVLKALVSHPREPLSRDKLMNLARGREYSAMERSIDVQISRLRRMVEEDPAHPRYIQTVWGLGYVFVPDGSKA</sequence>
<dbReference type="EMBL" id="AJ288905">
    <property type="protein sequence ID" value="CAC34268.1"/>
    <property type="molecule type" value="Genomic_DNA"/>
</dbReference>
<dbReference type="EMBL" id="AE005674">
    <property type="protein sequence ID" value="AAN44885.2"/>
    <property type="molecule type" value="Genomic_DNA"/>
</dbReference>
<dbReference type="EMBL" id="AE014073">
    <property type="protein sequence ID" value="AAP19294.1"/>
    <property type="molecule type" value="Genomic_DNA"/>
</dbReference>
<dbReference type="EMBL" id="AF030314">
    <property type="protein sequence ID" value="AAB84276.1"/>
    <property type="molecule type" value="Genomic_DNA"/>
</dbReference>
<dbReference type="RefSeq" id="NP_709178.2">
    <property type="nucleotide sequence ID" value="NC_004337.2"/>
</dbReference>
<dbReference type="RefSeq" id="WP_001157751.1">
    <property type="nucleotide sequence ID" value="NZ_WPGW01000003.1"/>
</dbReference>
<dbReference type="SMR" id="P0AA21"/>
<dbReference type="STRING" id="198214.SF3424"/>
<dbReference type="PaxDb" id="198214-SF3424"/>
<dbReference type="GeneID" id="1025367"/>
<dbReference type="GeneID" id="98390506"/>
<dbReference type="KEGG" id="sfl:SF3424"/>
<dbReference type="KEGG" id="sfx:S4339"/>
<dbReference type="PATRIC" id="fig|198214.7.peg.4040"/>
<dbReference type="HOGENOM" id="CLU_000445_30_4_6"/>
<dbReference type="Proteomes" id="UP000001006">
    <property type="component" value="Chromosome"/>
</dbReference>
<dbReference type="Proteomes" id="UP000002673">
    <property type="component" value="Chromosome"/>
</dbReference>
<dbReference type="GO" id="GO:0005829">
    <property type="term" value="C:cytosol"/>
    <property type="evidence" value="ECO:0007669"/>
    <property type="project" value="TreeGrafter"/>
</dbReference>
<dbReference type="GO" id="GO:0032993">
    <property type="term" value="C:protein-DNA complex"/>
    <property type="evidence" value="ECO:0007669"/>
    <property type="project" value="TreeGrafter"/>
</dbReference>
<dbReference type="GO" id="GO:0000156">
    <property type="term" value="F:phosphorelay response regulator activity"/>
    <property type="evidence" value="ECO:0007669"/>
    <property type="project" value="TreeGrafter"/>
</dbReference>
<dbReference type="GO" id="GO:0000976">
    <property type="term" value="F:transcription cis-regulatory region binding"/>
    <property type="evidence" value="ECO:0007669"/>
    <property type="project" value="TreeGrafter"/>
</dbReference>
<dbReference type="GO" id="GO:0006355">
    <property type="term" value="P:regulation of DNA-templated transcription"/>
    <property type="evidence" value="ECO:0007669"/>
    <property type="project" value="InterPro"/>
</dbReference>
<dbReference type="CDD" id="cd00383">
    <property type="entry name" value="trans_reg_C"/>
    <property type="match status" value="1"/>
</dbReference>
<dbReference type="FunFam" id="1.10.10.10:FF:000023">
    <property type="entry name" value="Two-component response regulator OmpR"/>
    <property type="match status" value="1"/>
</dbReference>
<dbReference type="FunFam" id="3.40.50.2300:FF:000008">
    <property type="entry name" value="Two-component response regulator OmpR"/>
    <property type="match status" value="1"/>
</dbReference>
<dbReference type="Gene3D" id="3.40.50.2300">
    <property type="match status" value="1"/>
</dbReference>
<dbReference type="Gene3D" id="6.10.250.690">
    <property type="match status" value="1"/>
</dbReference>
<dbReference type="Gene3D" id="1.10.10.10">
    <property type="entry name" value="Winged helix-like DNA-binding domain superfamily/Winged helix DNA-binding domain"/>
    <property type="match status" value="1"/>
</dbReference>
<dbReference type="InterPro" id="IPR011006">
    <property type="entry name" value="CheY-like_superfamily"/>
</dbReference>
<dbReference type="InterPro" id="IPR001867">
    <property type="entry name" value="OmpR/PhoB-type_DNA-bd"/>
</dbReference>
<dbReference type="InterPro" id="IPR016032">
    <property type="entry name" value="Sig_transdc_resp-reg_C-effctor"/>
</dbReference>
<dbReference type="InterPro" id="IPR001789">
    <property type="entry name" value="Sig_transdc_resp-reg_receiver"/>
</dbReference>
<dbReference type="InterPro" id="IPR039420">
    <property type="entry name" value="WalR-like"/>
</dbReference>
<dbReference type="InterPro" id="IPR036388">
    <property type="entry name" value="WH-like_DNA-bd_sf"/>
</dbReference>
<dbReference type="NCBIfam" id="NF007005">
    <property type="entry name" value="PRK09468.1"/>
    <property type="match status" value="1"/>
</dbReference>
<dbReference type="PANTHER" id="PTHR48111:SF4">
    <property type="entry name" value="DNA-BINDING DUAL TRANSCRIPTIONAL REGULATOR OMPR"/>
    <property type="match status" value="1"/>
</dbReference>
<dbReference type="PANTHER" id="PTHR48111">
    <property type="entry name" value="REGULATOR OF RPOS"/>
    <property type="match status" value="1"/>
</dbReference>
<dbReference type="Pfam" id="PF00072">
    <property type="entry name" value="Response_reg"/>
    <property type="match status" value="1"/>
</dbReference>
<dbReference type="Pfam" id="PF00486">
    <property type="entry name" value="Trans_reg_C"/>
    <property type="match status" value="1"/>
</dbReference>
<dbReference type="SMART" id="SM00448">
    <property type="entry name" value="REC"/>
    <property type="match status" value="1"/>
</dbReference>
<dbReference type="SMART" id="SM00862">
    <property type="entry name" value="Trans_reg_C"/>
    <property type="match status" value="1"/>
</dbReference>
<dbReference type="SUPFAM" id="SSF46894">
    <property type="entry name" value="C-terminal effector domain of the bipartite response regulators"/>
    <property type="match status" value="1"/>
</dbReference>
<dbReference type="SUPFAM" id="SSF52172">
    <property type="entry name" value="CheY-like"/>
    <property type="match status" value="1"/>
</dbReference>
<dbReference type="PROSITE" id="PS51755">
    <property type="entry name" value="OMPR_PHOB"/>
    <property type="match status" value="1"/>
</dbReference>
<dbReference type="PROSITE" id="PS50110">
    <property type="entry name" value="RESPONSE_REGULATORY"/>
    <property type="match status" value="1"/>
</dbReference>